<gene>
    <name evidence="1" type="primary">fabZ</name>
    <name type="ordered locus">SERP1705</name>
</gene>
<protein>
    <recommendedName>
        <fullName evidence="1">3-hydroxyacyl-[acyl-carrier-protein] dehydratase FabZ</fullName>
        <ecNumber evidence="1">4.2.1.59</ecNumber>
    </recommendedName>
    <alternativeName>
        <fullName evidence="1">(3R)-hydroxymyristoyl-[acyl-carrier-protein] dehydratase</fullName>
        <shortName evidence="1">(3R)-hydroxymyristoyl-ACP dehydrase</shortName>
    </alternativeName>
    <alternativeName>
        <fullName evidence="1">Beta-hydroxyacyl-ACP dehydratase</fullName>
    </alternativeName>
</protein>
<comment type="function">
    <text evidence="1">Involved in unsaturated fatty acids biosynthesis. Catalyzes the dehydration of short chain beta-hydroxyacyl-ACPs and long chain saturated and unsaturated beta-hydroxyacyl-ACPs.</text>
</comment>
<comment type="catalytic activity">
    <reaction evidence="1">
        <text>a (3R)-hydroxyacyl-[ACP] = a (2E)-enoyl-[ACP] + H2O</text>
        <dbReference type="Rhea" id="RHEA:13097"/>
        <dbReference type="Rhea" id="RHEA-COMP:9925"/>
        <dbReference type="Rhea" id="RHEA-COMP:9945"/>
        <dbReference type="ChEBI" id="CHEBI:15377"/>
        <dbReference type="ChEBI" id="CHEBI:78784"/>
        <dbReference type="ChEBI" id="CHEBI:78827"/>
        <dbReference type="EC" id="4.2.1.59"/>
    </reaction>
</comment>
<comment type="subcellular location">
    <subcellularLocation>
        <location evidence="1">Cytoplasm</location>
    </subcellularLocation>
</comment>
<comment type="similarity">
    <text evidence="1">Belongs to the thioester dehydratase family. FabZ subfamily.</text>
</comment>
<evidence type="ECO:0000255" key="1">
    <source>
        <dbReference type="HAMAP-Rule" id="MF_00406"/>
    </source>
</evidence>
<feature type="chain" id="PRO_0000091737" description="3-hydroxyacyl-[acyl-carrier-protein] dehydratase FabZ">
    <location>
        <begin position="1"/>
        <end position="145"/>
    </location>
</feature>
<feature type="active site" evidence="1">
    <location>
        <position position="51"/>
    </location>
</feature>
<sequence>METIFDYNQIKQIIPHRQPFLLIDKIVEYEEGKRCVGLKQVSGNEPFFQGHFPNYAVMPGVLITEALAQTGAVAMLNSEENKGKIALFAGIDKCRFKKQVVPGDTLMLEVEITKIKGPIGKGSAKATVDGQLACSCELTFAIQDA</sequence>
<organism>
    <name type="scientific">Staphylococcus epidermidis (strain ATCC 35984 / DSM 28319 / BCRC 17069 / CCUG 31568 / BM 3577 / RP62A)</name>
    <dbReference type="NCBI Taxonomy" id="176279"/>
    <lineage>
        <taxon>Bacteria</taxon>
        <taxon>Bacillati</taxon>
        <taxon>Bacillota</taxon>
        <taxon>Bacilli</taxon>
        <taxon>Bacillales</taxon>
        <taxon>Staphylococcaceae</taxon>
        <taxon>Staphylococcus</taxon>
    </lineage>
</organism>
<reference key="1">
    <citation type="journal article" date="2005" name="J. Bacteriol.">
        <title>Insights on evolution of virulence and resistance from the complete genome analysis of an early methicillin-resistant Staphylococcus aureus strain and a biofilm-producing methicillin-resistant Staphylococcus epidermidis strain.</title>
        <authorList>
            <person name="Gill S.R."/>
            <person name="Fouts D.E."/>
            <person name="Archer G.L."/>
            <person name="Mongodin E.F."/>
            <person name="DeBoy R.T."/>
            <person name="Ravel J."/>
            <person name="Paulsen I.T."/>
            <person name="Kolonay J.F."/>
            <person name="Brinkac L.M."/>
            <person name="Beanan M.J."/>
            <person name="Dodson R.J."/>
            <person name="Daugherty S.C."/>
            <person name="Madupu R."/>
            <person name="Angiuoli S.V."/>
            <person name="Durkin A.S."/>
            <person name="Haft D.H."/>
            <person name="Vamathevan J.J."/>
            <person name="Khouri H."/>
            <person name="Utterback T.R."/>
            <person name="Lee C."/>
            <person name="Dimitrov G."/>
            <person name="Jiang L."/>
            <person name="Qin H."/>
            <person name="Weidman J."/>
            <person name="Tran K."/>
            <person name="Kang K.H."/>
            <person name="Hance I.R."/>
            <person name="Nelson K.E."/>
            <person name="Fraser C.M."/>
        </authorList>
    </citation>
    <scope>NUCLEOTIDE SEQUENCE [LARGE SCALE GENOMIC DNA]</scope>
    <source>
        <strain>ATCC 35984 / DSM 28319 / BCRC 17069 / CCUG 31568 / BM 3577 / RP62A</strain>
    </source>
</reference>
<keyword id="KW-0963">Cytoplasm</keyword>
<keyword id="KW-0441">Lipid A biosynthesis</keyword>
<keyword id="KW-0444">Lipid biosynthesis</keyword>
<keyword id="KW-0443">Lipid metabolism</keyword>
<keyword id="KW-0456">Lyase</keyword>
<keyword id="KW-1185">Reference proteome</keyword>
<accession>Q5HMC3</accession>
<proteinExistence type="inferred from homology"/>
<dbReference type="EC" id="4.2.1.59" evidence="1"/>
<dbReference type="EMBL" id="CP000029">
    <property type="protein sequence ID" value="AAW55083.1"/>
    <property type="molecule type" value="Genomic_DNA"/>
</dbReference>
<dbReference type="RefSeq" id="WP_001829953.1">
    <property type="nucleotide sequence ID" value="NC_002976.3"/>
</dbReference>
<dbReference type="SMR" id="Q5HMC3"/>
<dbReference type="STRING" id="176279.SERP1705"/>
<dbReference type="GeneID" id="50018203"/>
<dbReference type="KEGG" id="ser:SERP1705"/>
<dbReference type="eggNOG" id="COG0764">
    <property type="taxonomic scope" value="Bacteria"/>
</dbReference>
<dbReference type="HOGENOM" id="CLU_078912_3_0_9"/>
<dbReference type="Proteomes" id="UP000000531">
    <property type="component" value="Chromosome"/>
</dbReference>
<dbReference type="GO" id="GO:0005737">
    <property type="term" value="C:cytoplasm"/>
    <property type="evidence" value="ECO:0007669"/>
    <property type="project" value="UniProtKB-SubCell"/>
</dbReference>
<dbReference type="GO" id="GO:0016020">
    <property type="term" value="C:membrane"/>
    <property type="evidence" value="ECO:0007669"/>
    <property type="project" value="GOC"/>
</dbReference>
<dbReference type="GO" id="GO:0019171">
    <property type="term" value="F:(3R)-hydroxyacyl-[acyl-carrier-protein] dehydratase activity"/>
    <property type="evidence" value="ECO:0007669"/>
    <property type="project" value="UniProtKB-EC"/>
</dbReference>
<dbReference type="GO" id="GO:0006633">
    <property type="term" value="P:fatty acid biosynthetic process"/>
    <property type="evidence" value="ECO:0007669"/>
    <property type="project" value="UniProtKB-UniRule"/>
</dbReference>
<dbReference type="GO" id="GO:0009245">
    <property type="term" value="P:lipid A biosynthetic process"/>
    <property type="evidence" value="ECO:0007669"/>
    <property type="project" value="UniProtKB-UniRule"/>
</dbReference>
<dbReference type="CDD" id="cd01288">
    <property type="entry name" value="FabZ"/>
    <property type="match status" value="1"/>
</dbReference>
<dbReference type="FunFam" id="3.10.129.10:FF:000001">
    <property type="entry name" value="3-hydroxyacyl-[acyl-carrier-protein] dehydratase FabZ"/>
    <property type="match status" value="1"/>
</dbReference>
<dbReference type="Gene3D" id="3.10.129.10">
    <property type="entry name" value="Hotdog Thioesterase"/>
    <property type="match status" value="1"/>
</dbReference>
<dbReference type="HAMAP" id="MF_00406">
    <property type="entry name" value="FabZ"/>
    <property type="match status" value="1"/>
</dbReference>
<dbReference type="InterPro" id="IPR013114">
    <property type="entry name" value="FabA_FabZ"/>
</dbReference>
<dbReference type="InterPro" id="IPR010084">
    <property type="entry name" value="FabZ"/>
</dbReference>
<dbReference type="InterPro" id="IPR029069">
    <property type="entry name" value="HotDog_dom_sf"/>
</dbReference>
<dbReference type="NCBIfam" id="TIGR01750">
    <property type="entry name" value="fabZ"/>
    <property type="match status" value="1"/>
</dbReference>
<dbReference type="NCBIfam" id="NF000582">
    <property type="entry name" value="PRK00006.1"/>
    <property type="match status" value="1"/>
</dbReference>
<dbReference type="PANTHER" id="PTHR30272">
    <property type="entry name" value="3-HYDROXYACYL-[ACYL-CARRIER-PROTEIN] DEHYDRATASE"/>
    <property type="match status" value="1"/>
</dbReference>
<dbReference type="PANTHER" id="PTHR30272:SF1">
    <property type="entry name" value="3-HYDROXYACYL-[ACYL-CARRIER-PROTEIN] DEHYDRATASE"/>
    <property type="match status" value="1"/>
</dbReference>
<dbReference type="Pfam" id="PF07977">
    <property type="entry name" value="FabA"/>
    <property type="match status" value="1"/>
</dbReference>
<dbReference type="SUPFAM" id="SSF54637">
    <property type="entry name" value="Thioesterase/thiol ester dehydrase-isomerase"/>
    <property type="match status" value="1"/>
</dbReference>
<name>FABZ_STAEQ</name>